<proteinExistence type="evidence at transcript level"/>
<name>UVE1_NEUCR</name>
<accession>Q01408</accession>
<accession>Q7RVT6</accession>
<feature type="chain" id="PRO_0000215028" description="UV-damage endonuclease">
    <location>
        <begin position="1"/>
        <end position="656"/>
    </location>
</feature>
<feature type="region of interest" description="Disordered" evidence="1">
    <location>
        <begin position="1"/>
        <end position="82"/>
    </location>
</feature>
<feature type="region of interest" description="Disordered" evidence="1">
    <location>
        <begin position="119"/>
        <end position="146"/>
    </location>
</feature>
<feature type="region of interest" description="Disordered" evidence="1">
    <location>
        <begin position="175"/>
        <end position="194"/>
    </location>
</feature>
<feature type="region of interest" description="Disordered" evidence="1">
    <location>
        <begin position="241"/>
        <end position="264"/>
    </location>
</feature>
<feature type="region of interest" description="Disordered" evidence="1">
    <location>
        <begin position="492"/>
        <end position="515"/>
    </location>
</feature>
<feature type="region of interest" description="Disordered" evidence="1">
    <location>
        <begin position="550"/>
        <end position="620"/>
    </location>
</feature>
<feature type="region of interest" description="Disordered" evidence="1">
    <location>
        <begin position="636"/>
        <end position="656"/>
    </location>
</feature>
<feature type="compositionally biased region" description="Low complexity" evidence="1">
    <location>
        <begin position="13"/>
        <end position="32"/>
    </location>
</feature>
<feature type="compositionally biased region" description="Basic and acidic residues" evidence="1">
    <location>
        <begin position="48"/>
        <end position="82"/>
    </location>
</feature>
<feature type="compositionally biased region" description="Basic and acidic residues" evidence="1">
    <location>
        <begin position="135"/>
        <end position="146"/>
    </location>
</feature>
<feature type="compositionally biased region" description="Basic and acidic residues" evidence="1">
    <location>
        <begin position="550"/>
        <end position="561"/>
    </location>
</feature>
<feature type="compositionally biased region" description="Basic residues" evidence="1">
    <location>
        <begin position="568"/>
        <end position="579"/>
    </location>
</feature>
<feature type="compositionally biased region" description="Acidic residues" evidence="1">
    <location>
        <begin position="583"/>
        <end position="595"/>
    </location>
</feature>
<feature type="compositionally biased region" description="Basic and acidic residues" evidence="1">
    <location>
        <begin position="596"/>
        <end position="614"/>
    </location>
</feature>
<feature type="compositionally biased region" description="Acidic residues" evidence="1">
    <location>
        <begin position="647"/>
        <end position="656"/>
    </location>
</feature>
<sequence>MPSRKSKAAALDTPQSESSTFSSTLDSSAPSPARNLRRSGRNILQPSSEKDRDHEKRSGEELAGRMMGKDANGHCLREGKEQEEGVKMAIEGLARMERRLQRATKRQKKQLEEDGIPVPSVVSRFPTAPYHHKSTNAEEREAKEPVLKTHSKDVEREAEIGVDDVVKMEPAATNIIEPEDAQDAAERGAARPPAVNSSYLPLPWKGRLGYACLNTYLRNAKPPIFSSRTCRMASIVDHRHPLQFEDEPEHHLKNKPDKSKEPQDELGHKFVQELGLANARDIVKMLCWNEKYGIRFLRLSSEMFPFASHPVHGYKLAPFASEVLAEAGRVAAELGHRLTTHPGQFTQLGSPRKEVVESAIRDLEYHDELLSLLKLPEQQNRDAVMIIHMGGQFGDKAATLERFKRNYARLSQSCKNRLVLENDDVGWTVHDLLPVCEELNIPMVLDYHHHNICFDPAHLREGTLDISDPKLQERIANTWKRKGIKQKMHYSEPCDGAVTPRDRRKHRPRVMTLPPCPPDMDLMIEAKDKEQAVFELMRTFKLPGFEKINDMVPYDRDDENRPAPPVKAPKKKKGGKRKRTTDEEAAEPEEVDTAADDVKDAPEGPKEVPEEERAMGGPYNRVYWPLGCEEWLKPKKREVKKGKVPEEVEDEGEFDG</sequence>
<keyword id="KW-0227">DNA damage</keyword>
<keyword id="KW-0228">DNA excision</keyword>
<keyword id="KW-0234">DNA repair</keyword>
<keyword id="KW-0255">Endonuclease</keyword>
<keyword id="KW-0378">Hydrolase</keyword>
<keyword id="KW-0540">Nuclease</keyword>
<keyword id="KW-1185">Reference proteome</keyword>
<dbReference type="EC" id="3.-.-.-"/>
<dbReference type="EMBL" id="D11392">
    <property type="protein sequence ID" value="BAA74539.1"/>
    <property type="molecule type" value="mRNA"/>
</dbReference>
<dbReference type="EMBL" id="AL670004">
    <property type="protein sequence ID" value="CAD21267.1"/>
    <property type="molecule type" value="Genomic_DNA"/>
</dbReference>
<dbReference type="EMBL" id="CM002240">
    <property type="protein sequence ID" value="EAA31744.2"/>
    <property type="status" value="ALT_INIT"/>
    <property type="molecule type" value="Genomic_DNA"/>
</dbReference>
<dbReference type="PIR" id="S55262">
    <property type="entry name" value="S55262"/>
</dbReference>
<dbReference type="RefSeq" id="XP_960980.2">
    <property type="nucleotide sequence ID" value="XM_955887.2"/>
</dbReference>
<dbReference type="SMR" id="Q01408"/>
<dbReference type="STRING" id="367110.Q01408"/>
<dbReference type="PaxDb" id="5141-EFNCRP00000008795"/>
<dbReference type="EnsemblFungi" id="EAA31744">
    <property type="protein sequence ID" value="EAA31744"/>
    <property type="gene ID" value="NCU08850"/>
</dbReference>
<dbReference type="GeneID" id="3877135"/>
<dbReference type="KEGG" id="ncr:NCU08850"/>
<dbReference type="HOGENOM" id="CLU_017168_1_0_1"/>
<dbReference type="InParanoid" id="Q01408"/>
<dbReference type="OMA" id="MEEWLKP"/>
<dbReference type="OrthoDB" id="541883at2759"/>
<dbReference type="Proteomes" id="UP000001805">
    <property type="component" value="Chromosome 2, Linkage Group V"/>
</dbReference>
<dbReference type="GO" id="GO:0005739">
    <property type="term" value="C:mitochondrion"/>
    <property type="evidence" value="ECO:0000318"/>
    <property type="project" value="GO_Central"/>
</dbReference>
<dbReference type="GO" id="GO:0005634">
    <property type="term" value="C:nucleus"/>
    <property type="evidence" value="ECO:0000318"/>
    <property type="project" value="GO_Central"/>
</dbReference>
<dbReference type="GO" id="GO:0004519">
    <property type="term" value="F:endonuclease activity"/>
    <property type="evidence" value="ECO:0007669"/>
    <property type="project" value="UniProtKB-KW"/>
</dbReference>
<dbReference type="GO" id="GO:0043504">
    <property type="term" value="P:mitochondrial DNA repair"/>
    <property type="evidence" value="ECO:0000318"/>
    <property type="project" value="GO_Central"/>
</dbReference>
<dbReference type="GO" id="GO:0006289">
    <property type="term" value="P:nucleotide-excision repair"/>
    <property type="evidence" value="ECO:0007669"/>
    <property type="project" value="InterPro"/>
</dbReference>
<dbReference type="GO" id="GO:0009411">
    <property type="term" value="P:response to UV"/>
    <property type="evidence" value="ECO:0007669"/>
    <property type="project" value="InterPro"/>
</dbReference>
<dbReference type="Gene3D" id="3.20.20.150">
    <property type="entry name" value="Divalent-metal-dependent TIM barrel enzymes"/>
    <property type="match status" value="1"/>
</dbReference>
<dbReference type="InterPro" id="IPR004601">
    <property type="entry name" value="UvdE"/>
</dbReference>
<dbReference type="InterPro" id="IPR036237">
    <property type="entry name" value="Xyl_isomerase-like_sf"/>
</dbReference>
<dbReference type="NCBIfam" id="TIGR00629">
    <property type="entry name" value="uvde"/>
    <property type="match status" value="1"/>
</dbReference>
<dbReference type="PANTHER" id="PTHR31290">
    <property type="entry name" value="UV-DAMAGE ENDONUCLEASE"/>
    <property type="match status" value="1"/>
</dbReference>
<dbReference type="PANTHER" id="PTHR31290:SF5">
    <property type="entry name" value="UV-DAMAGE ENDONUCLEASE"/>
    <property type="match status" value="1"/>
</dbReference>
<dbReference type="Pfam" id="PF03851">
    <property type="entry name" value="UvdE"/>
    <property type="match status" value="1"/>
</dbReference>
<dbReference type="SUPFAM" id="SSF51658">
    <property type="entry name" value="Xylose isomerase-like"/>
    <property type="match status" value="1"/>
</dbReference>
<comment type="function">
    <text>Endonuclease for the repair of UV-irradiated DNA. Involved in the excision of cyclobutane pyrimidine dimers (CPD) and 6-4 pyrimidine pyrimidones (6-4PP) which forms the UV damage repair (UVDR) pathway.</text>
</comment>
<comment type="cofactor">
    <cofactor>
        <name>Mg(2+)</name>
        <dbReference type="ChEBI" id="CHEBI:18420"/>
    </cofactor>
</comment>
<comment type="similarity">
    <text evidence="2">Belongs to the uve1/UvsE family.</text>
</comment>
<comment type="sequence caution" evidence="2">
    <conflict type="erroneous initiation">
        <sequence resource="EMBL-CDS" id="EAA31744"/>
    </conflict>
    <text>Extended N-terminus.</text>
</comment>
<gene>
    <name type="primary">mus-18</name>
    <name type="synonym">uve1</name>
    <name type="ORF">5E6.270</name>
    <name type="ORF">NCU08850</name>
</gene>
<evidence type="ECO:0000256" key="1">
    <source>
        <dbReference type="SAM" id="MobiDB-lite"/>
    </source>
</evidence>
<evidence type="ECO:0000305" key="2"/>
<reference key="1">
    <citation type="journal article" date="1995" name="EMBO J.">
        <title>A eukaryotic gene encoding an endonuclease that specifically repairs DNA damaged by ultraviolet light.</title>
        <authorList>
            <person name="Yajima H."/>
            <person name="Takao M."/>
            <person name="Yasuhira S."/>
            <person name="Zhao J.H."/>
            <person name="Ishii C."/>
            <person name="Inoue H."/>
            <person name="Yasui A."/>
        </authorList>
    </citation>
    <scope>NUCLEOTIDE SEQUENCE [MRNA]</scope>
    <source>
        <strain>ATCC 24698 / 74-OR23-1A / CBS 708.71 / DSM 1257 / FGSC 987</strain>
    </source>
</reference>
<reference key="2">
    <citation type="journal article" date="2003" name="Nucleic Acids Res.">
        <title>What's in the genome of a filamentous fungus? Analysis of the Neurospora genome sequence.</title>
        <authorList>
            <person name="Mannhaupt G."/>
            <person name="Montrone C."/>
            <person name="Haase D."/>
            <person name="Mewes H.-W."/>
            <person name="Aign V."/>
            <person name="Hoheisel J.D."/>
            <person name="Fartmann B."/>
            <person name="Nyakatura G."/>
            <person name="Kempken F."/>
            <person name="Maier J."/>
            <person name="Schulte U."/>
        </authorList>
    </citation>
    <scope>NUCLEOTIDE SEQUENCE [LARGE SCALE GENOMIC DNA]</scope>
    <source>
        <strain>ATCC 24698 / 74-OR23-1A / CBS 708.71 / DSM 1257 / FGSC 987</strain>
    </source>
</reference>
<reference key="3">
    <citation type="journal article" date="2003" name="Nature">
        <title>The genome sequence of the filamentous fungus Neurospora crassa.</title>
        <authorList>
            <person name="Galagan J.E."/>
            <person name="Calvo S.E."/>
            <person name="Borkovich K.A."/>
            <person name="Selker E.U."/>
            <person name="Read N.D."/>
            <person name="Jaffe D.B."/>
            <person name="FitzHugh W."/>
            <person name="Ma L.-J."/>
            <person name="Smirnov S."/>
            <person name="Purcell S."/>
            <person name="Rehman B."/>
            <person name="Elkins T."/>
            <person name="Engels R."/>
            <person name="Wang S."/>
            <person name="Nielsen C.B."/>
            <person name="Butler J."/>
            <person name="Endrizzi M."/>
            <person name="Qui D."/>
            <person name="Ianakiev P."/>
            <person name="Bell-Pedersen D."/>
            <person name="Nelson M.A."/>
            <person name="Werner-Washburne M."/>
            <person name="Selitrennikoff C.P."/>
            <person name="Kinsey J.A."/>
            <person name="Braun E.L."/>
            <person name="Zelter A."/>
            <person name="Schulte U."/>
            <person name="Kothe G.O."/>
            <person name="Jedd G."/>
            <person name="Mewes H.-W."/>
            <person name="Staben C."/>
            <person name="Marcotte E."/>
            <person name="Greenberg D."/>
            <person name="Roy A."/>
            <person name="Foley K."/>
            <person name="Naylor J."/>
            <person name="Stange-Thomann N."/>
            <person name="Barrett R."/>
            <person name="Gnerre S."/>
            <person name="Kamal M."/>
            <person name="Kamvysselis M."/>
            <person name="Mauceli E.W."/>
            <person name="Bielke C."/>
            <person name="Rudd S."/>
            <person name="Frishman D."/>
            <person name="Krystofova S."/>
            <person name="Rasmussen C."/>
            <person name="Metzenberg R.L."/>
            <person name="Perkins D.D."/>
            <person name="Kroken S."/>
            <person name="Cogoni C."/>
            <person name="Macino G."/>
            <person name="Catcheside D.E.A."/>
            <person name="Li W."/>
            <person name="Pratt R.J."/>
            <person name="Osmani S.A."/>
            <person name="DeSouza C.P.C."/>
            <person name="Glass N.L."/>
            <person name="Orbach M.J."/>
            <person name="Berglund J.A."/>
            <person name="Voelker R."/>
            <person name="Yarden O."/>
            <person name="Plamann M."/>
            <person name="Seiler S."/>
            <person name="Dunlap J.C."/>
            <person name="Radford A."/>
            <person name="Aramayo R."/>
            <person name="Natvig D.O."/>
            <person name="Alex L.A."/>
            <person name="Mannhaupt G."/>
            <person name="Ebbole D.J."/>
            <person name="Freitag M."/>
            <person name="Paulsen I."/>
            <person name="Sachs M.S."/>
            <person name="Lander E.S."/>
            <person name="Nusbaum C."/>
            <person name="Birren B.W."/>
        </authorList>
    </citation>
    <scope>NUCLEOTIDE SEQUENCE [LARGE SCALE GENOMIC DNA]</scope>
    <source>
        <strain>ATCC 24698 / 74-OR23-1A / CBS 708.71 / DSM 1257 / FGSC 987</strain>
    </source>
</reference>
<protein>
    <recommendedName>
        <fullName>UV-damage endonuclease</fullName>
        <shortName>UV-endonuclease</shortName>
        <ecNumber>3.-.-.-</ecNumber>
    </recommendedName>
    <alternativeName>
        <fullName>Mutagen-sensitive protein 18</fullName>
    </alternativeName>
</protein>
<organism>
    <name type="scientific">Neurospora crassa (strain ATCC 24698 / 74-OR23-1A / CBS 708.71 / DSM 1257 / FGSC 987)</name>
    <dbReference type="NCBI Taxonomy" id="367110"/>
    <lineage>
        <taxon>Eukaryota</taxon>
        <taxon>Fungi</taxon>
        <taxon>Dikarya</taxon>
        <taxon>Ascomycota</taxon>
        <taxon>Pezizomycotina</taxon>
        <taxon>Sordariomycetes</taxon>
        <taxon>Sordariomycetidae</taxon>
        <taxon>Sordariales</taxon>
        <taxon>Sordariaceae</taxon>
        <taxon>Neurospora</taxon>
    </lineage>
</organism>